<feature type="chain" id="PRO_0000332706" description="Transcriptional repressor RcnR">
    <location>
        <begin position="1"/>
        <end position="90"/>
    </location>
</feature>
<gene>
    <name type="primary">rcnR</name>
    <name type="ordered locus">SSON_2153</name>
</gene>
<accession>Q3Z0A5</accession>
<keyword id="KW-0963">Cytoplasm</keyword>
<keyword id="KW-0238">DNA-binding</keyword>
<keyword id="KW-1185">Reference proteome</keyword>
<keyword id="KW-0678">Repressor</keyword>
<keyword id="KW-0804">Transcription</keyword>
<keyword id="KW-0805">Transcription regulation</keyword>
<comment type="function">
    <text evidence="1">Repressor of rcnA expression. Acts by binding specifically to the rcnA promoter in the absence of nickel and cobalt. In the presence of one of these metals, it has a weaker affinity for rcnA promoter (By similarity).</text>
</comment>
<comment type="subcellular location">
    <subcellularLocation>
        <location evidence="2">Cytoplasm</location>
    </subcellularLocation>
</comment>
<comment type="similarity">
    <text evidence="2">Belongs to the FrmR/RcnR family.</text>
</comment>
<proteinExistence type="inferred from homology"/>
<reference key="1">
    <citation type="journal article" date="2005" name="Nucleic Acids Res.">
        <title>Genome dynamics and diversity of Shigella species, the etiologic agents of bacillary dysentery.</title>
        <authorList>
            <person name="Yang F."/>
            <person name="Yang J."/>
            <person name="Zhang X."/>
            <person name="Chen L."/>
            <person name="Jiang Y."/>
            <person name="Yan Y."/>
            <person name="Tang X."/>
            <person name="Wang J."/>
            <person name="Xiong Z."/>
            <person name="Dong J."/>
            <person name="Xue Y."/>
            <person name="Zhu Y."/>
            <person name="Xu X."/>
            <person name="Sun L."/>
            <person name="Chen S."/>
            <person name="Nie H."/>
            <person name="Peng J."/>
            <person name="Xu J."/>
            <person name="Wang Y."/>
            <person name="Yuan Z."/>
            <person name="Wen Y."/>
            <person name="Yao Z."/>
            <person name="Shen Y."/>
            <person name="Qiang B."/>
            <person name="Hou Y."/>
            <person name="Yu J."/>
            <person name="Jin Q."/>
        </authorList>
    </citation>
    <scope>NUCLEOTIDE SEQUENCE [LARGE SCALE GENOMIC DNA]</scope>
    <source>
        <strain>Ss046</strain>
    </source>
</reference>
<dbReference type="EMBL" id="CP000038">
    <property type="protein sequence ID" value="AAZ88807.1"/>
    <property type="molecule type" value="Genomic_DNA"/>
</dbReference>
<dbReference type="RefSeq" id="WP_000019944.1">
    <property type="nucleotide sequence ID" value="NC_007384.1"/>
</dbReference>
<dbReference type="SMR" id="Q3Z0A5"/>
<dbReference type="GeneID" id="93775089"/>
<dbReference type="KEGG" id="ssn:SSON_2153"/>
<dbReference type="HOGENOM" id="CLU_130332_3_0_6"/>
<dbReference type="Proteomes" id="UP000002529">
    <property type="component" value="Chromosome"/>
</dbReference>
<dbReference type="GO" id="GO:0005737">
    <property type="term" value="C:cytoplasm"/>
    <property type="evidence" value="ECO:0007669"/>
    <property type="project" value="UniProtKB-SubCell"/>
</dbReference>
<dbReference type="GO" id="GO:0003677">
    <property type="term" value="F:DNA binding"/>
    <property type="evidence" value="ECO:0007669"/>
    <property type="project" value="UniProtKB-KW"/>
</dbReference>
<dbReference type="GO" id="GO:0046872">
    <property type="term" value="F:metal ion binding"/>
    <property type="evidence" value="ECO:0007669"/>
    <property type="project" value="InterPro"/>
</dbReference>
<dbReference type="GO" id="GO:0045892">
    <property type="term" value="P:negative regulation of DNA-templated transcription"/>
    <property type="evidence" value="ECO:0007669"/>
    <property type="project" value="UniProtKB-ARBA"/>
</dbReference>
<dbReference type="CDD" id="cd10153">
    <property type="entry name" value="RcnR-FrmR-like_DUF156"/>
    <property type="match status" value="1"/>
</dbReference>
<dbReference type="FunFam" id="1.20.58.1000:FF:000001">
    <property type="entry name" value="Transcriptional repressor RcnR"/>
    <property type="match status" value="1"/>
</dbReference>
<dbReference type="Gene3D" id="1.20.58.1000">
    <property type="entry name" value="Metal-sensitive repressor, helix protomer"/>
    <property type="match status" value="1"/>
</dbReference>
<dbReference type="InterPro" id="IPR003735">
    <property type="entry name" value="Metal_Tscrpt_repr"/>
</dbReference>
<dbReference type="InterPro" id="IPR038390">
    <property type="entry name" value="Metal_Tscrpt_repr_sf"/>
</dbReference>
<dbReference type="NCBIfam" id="NF011613">
    <property type="entry name" value="PRK15039.1"/>
    <property type="match status" value="1"/>
</dbReference>
<dbReference type="PANTHER" id="PTHR33677">
    <property type="entry name" value="TRANSCRIPTIONAL REPRESSOR FRMR-RELATED"/>
    <property type="match status" value="1"/>
</dbReference>
<dbReference type="PANTHER" id="PTHR33677:SF1">
    <property type="entry name" value="TRANSCRIPTIONAL REPRESSOR RCNR"/>
    <property type="match status" value="1"/>
</dbReference>
<dbReference type="Pfam" id="PF02583">
    <property type="entry name" value="Trns_repr_metal"/>
    <property type="match status" value="1"/>
</dbReference>
<evidence type="ECO:0000250" key="1"/>
<evidence type="ECO:0000305" key="2"/>
<organism>
    <name type="scientific">Shigella sonnei (strain Ss046)</name>
    <dbReference type="NCBI Taxonomy" id="300269"/>
    <lineage>
        <taxon>Bacteria</taxon>
        <taxon>Pseudomonadati</taxon>
        <taxon>Pseudomonadota</taxon>
        <taxon>Gammaproteobacteria</taxon>
        <taxon>Enterobacterales</taxon>
        <taxon>Enterobacteriaceae</taxon>
        <taxon>Shigella</taxon>
    </lineage>
</organism>
<protein>
    <recommendedName>
        <fullName>Transcriptional repressor RcnR</fullName>
    </recommendedName>
</protein>
<name>RCNR_SHISS</name>
<sequence length="90" mass="10134">MSHTIRDKQKLKARASKIQGQVVALKKMLDEPHECAAVLQQIAAIRGAVNGLMREVIKGHLTEHIVHQGDELKREEDLDVVLKVLDSYIK</sequence>